<proteinExistence type="predicted"/>
<keyword id="KW-0496">Mitochondrion</keyword>
<sequence length="760" mass="89729">MRTANIFTQITQINTTNDVVSFRNTTGKRVIISFTLKTQYRQFSNVTNNIRPQVLNLKEKGIENRKKLVNSQSLSFFKTTAQAIESQLNSGNLLASSQSIEEIKNISLPVDLNKNVIRFKKRKLLTAYLKQLQIKKLNAVKFTFKLKNRLLNRKTVVVSYTPKVNNTNKVNFLQQLLTFKQKVAKHYAITKISNKNQTMFLNTHGIFRNQKVFKRSKLKMLHQQKVSIKLLQKVLRFQKQRYSILKPHNKFDSILTALMADCNPKKRMKKNSLPIDINHRTEISQQQKDSDLEGLLTKYKVKTQELITKITKKQRRLKYYLILTQLRVQKDLSKGNEVEKKQEIQKKNEQKQQKSIQTQFIKKVLTGVLQKNEQQQETQKALIIKILLNILRRKGEVTGEGNMDITYPYLKEVKKKQRQLQMAYVAANIKMKLVNDFIDYKGDSRLWGIHVNLIKSRNQYLNIIETQFENEENVYQNPIYKTKLVPLRSEVEYLKKTRYMKYGVNSRNKITILNNVMESDKKLYNLRLPKQRVQVPTLLTIYKNVRECLSGTRAQGKKEEDRAIYQFVMKLEKLKRNRNRKQSKLRISKQQEIQPQKEESVKKEKVEQIPLRQGVLRITLKRRNMFLVCQNKSTKHVDTSLTARQEYYRIYNTKDFDAITQKGKKDLKATTVKPKGPIGRFISTEVFRRRVITQALLNLRAQIKYNVLDIEIRNPTSNPLIKTILYKNWYVYKNQGLLRMYKFTKNKAHGSMRQKKARRL</sequence>
<dbReference type="EMBL" id="DQ336395">
    <property type="protein sequence ID" value="ABC60399.1"/>
    <property type="molecule type" value="Genomic_DNA"/>
</dbReference>
<dbReference type="RefSeq" id="YP_492648.1">
    <property type="nucleotide sequence ID" value="NC_007787.2"/>
</dbReference>
<dbReference type="GeneID" id="3912636"/>
<dbReference type="GO" id="GO:0005739">
    <property type="term" value="C:mitochondrion"/>
    <property type="evidence" value="ECO:0007669"/>
    <property type="project" value="UniProtKB-SubCell"/>
</dbReference>
<accession>Q2LCP4</accession>
<protein>
    <recommendedName>
        <fullName>Uncharacterized mitochondrial protein Mp36</fullName>
    </recommendedName>
    <alternativeName>
        <fullName>ORF760</fullName>
    </alternativeName>
</protein>
<name>MP036_DICCI</name>
<comment type="subcellular location">
    <subcellularLocation>
        <location>Mitochondrion</location>
    </subcellularLocation>
</comment>
<feature type="chain" id="PRO_0000312426" description="Uncharacterized mitochondrial protein Mp36">
    <location>
        <begin position="1"/>
        <end position="760"/>
    </location>
</feature>
<feature type="region of interest" description="Disordered" evidence="1">
    <location>
        <begin position="578"/>
        <end position="604"/>
    </location>
</feature>
<feature type="compositionally biased region" description="Basic residues" evidence="1">
    <location>
        <begin position="578"/>
        <end position="587"/>
    </location>
</feature>
<feature type="compositionally biased region" description="Basic and acidic residues" evidence="1">
    <location>
        <begin position="595"/>
        <end position="604"/>
    </location>
</feature>
<evidence type="ECO:0000256" key="1">
    <source>
        <dbReference type="SAM" id="MobiDB-lite"/>
    </source>
</evidence>
<organism>
    <name type="scientific">Dictyostelium citrinum</name>
    <name type="common">Slime mold</name>
    <dbReference type="NCBI Taxonomy" id="361072"/>
    <lineage>
        <taxon>Eukaryota</taxon>
        <taxon>Amoebozoa</taxon>
        <taxon>Evosea</taxon>
        <taxon>Eumycetozoa</taxon>
        <taxon>Dictyostelia</taxon>
        <taxon>Dictyosteliales</taxon>
        <taxon>Dictyosteliaceae</taxon>
        <taxon>Dictyostelium</taxon>
    </lineage>
</organism>
<reference key="1">
    <citation type="journal article" date="2008" name="Mol. Biol. Evol.">
        <title>Mitochondrial genome evolution in the social amoebae.</title>
        <authorList>
            <person name="Heidel A.J."/>
            <person name="Gloeckner G."/>
        </authorList>
    </citation>
    <scope>NUCLEOTIDE SEQUENCE [LARGE SCALE GENOMIC DNA]</scope>
</reference>
<geneLocation type="mitochondrion"/>